<evidence type="ECO:0000255" key="1">
    <source>
        <dbReference type="PROSITE-ProRule" id="PRU00156"/>
    </source>
</evidence>
<evidence type="ECO:0000305" key="2"/>
<organism>
    <name type="scientific">Caenorhabditis elegans</name>
    <dbReference type="NCBI Taxonomy" id="6239"/>
    <lineage>
        <taxon>Eukaryota</taxon>
        <taxon>Metazoa</taxon>
        <taxon>Ecdysozoa</taxon>
        <taxon>Nematoda</taxon>
        <taxon>Chromadorea</taxon>
        <taxon>Rhabditida</taxon>
        <taxon>Rhabditina</taxon>
        <taxon>Rhabditomorpha</taxon>
        <taxon>Rhabditoidea</taxon>
        <taxon>Rhabditidae</taxon>
        <taxon>Peloderinae</taxon>
        <taxon>Caenorhabditis</taxon>
    </lineage>
</organism>
<accession>P52018</accession>
<keyword id="KW-0413">Isomerase</keyword>
<keyword id="KW-1185">Reference proteome</keyword>
<keyword id="KW-0697">Rotamase</keyword>
<dbReference type="EC" id="5.2.1.8"/>
<dbReference type="EMBL" id="U34955">
    <property type="protein sequence ID" value="AAC47115.1"/>
    <property type="molecule type" value="mRNA"/>
</dbReference>
<dbReference type="EMBL" id="Z66499">
    <property type="protein sequence ID" value="CAA91297.1"/>
    <property type="molecule type" value="Genomic_DNA"/>
</dbReference>
<dbReference type="PIR" id="T18578">
    <property type="entry name" value="T18578"/>
</dbReference>
<dbReference type="RefSeq" id="NP_495855.1">
    <property type="nucleotide sequence ID" value="NM_063454.9"/>
</dbReference>
<dbReference type="SMR" id="P52018"/>
<dbReference type="BioGRID" id="39721">
    <property type="interactions" value="3"/>
</dbReference>
<dbReference type="FunCoup" id="P52018">
    <property type="interactions" value="3346"/>
</dbReference>
<dbReference type="STRING" id="6239.T01B7.4.1"/>
<dbReference type="PaxDb" id="6239-T01B7.4"/>
<dbReference type="PeptideAtlas" id="P52018"/>
<dbReference type="EnsemblMetazoa" id="T01B7.4.1">
    <property type="protein sequence ID" value="T01B7.4.1"/>
    <property type="gene ID" value="WBGene00000887"/>
</dbReference>
<dbReference type="GeneID" id="174394"/>
<dbReference type="KEGG" id="cel:CELE_T01B7.4"/>
<dbReference type="UCSC" id="T01B7.4">
    <property type="organism name" value="c. elegans"/>
</dbReference>
<dbReference type="AGR" id="WB:WBGene00000887"/>
<dbReference type="CTD" id="174394"/>
<dbReference type="WormBase" id="T01B7.4">
    <property type="protein sequence ID" value="CE03588"/>
    <property type="gene ID" value="WBGene00000887"/>
    <property type="gene designation" value="cyn-11"/>
</dbReference>
<dbReference type="eggNOG" id="KOG0879">
    <property type="taxonomic scope" value="Eukaryota"/>
</dbReference>
<dbReference type="GeneTree" id="ENSGT00940000154721"/>
<dbReference type="HOGENOM" id="CLU_012062_4_3_1"/>
<dbReference type="InParanoid" id="P52018"/>
<dbReference type="OMA" id="SVWGQVI"/>
<dbReference type="OrthoDB" id="193499at2759"/>
<dbReference type="PhylomeDB" id="P52018"/>
<dbReference type="PRO" id="PR:P52018"/>
<dbReference type="Proteomes" id="UP000001940">
    <property type="component" value="Chromosome II"/>
</dbReference>
<dbReference type="Bgee" id="WBGene00000887">
    <property type="expression patterns" value="Expressed in embryo and 4 other cell types or tissues"/>
</dbReference>
<dbReference type="GO" id="GO:0005737">
    <property type="term" value="C:cytoplasm"/>
    <property type="evidence" value="ECO:0000318"/>
    <property type="project" value="GO_Central"/>
</dbReference>
<dbReference type="GO" id="GO:0043231">
    <property type="term" value="C:intracellular membrane-bounded organelle"/>
    <property type="evidence" value="ECO:0000318"/>
    <property type="project" value="GO_Central"/>
</dbReference>
<dbReference type="GO" id="GO:0016018">
    <property type="term" value="F:cyclosporin A binding"/>
    <property type="evidence" value="ECO:0000318"/>
    <property type="project" value="GO_Central"/>
</dbReference>
<dbReference type="GO" id="GO:0003755">
    <property type="term" value="F:peptidyl-prolyl cis-trans isomerase activity"/>
    <property type="evidence" value="ECO:0000318"/>
    <property type="project" value="GO_Central"/>
</dbReference>
<dbReference type="GO" id="GO:0006457">
    <property type="term" value="P:protein folding"/>
    <property type="evidence" value="ECO:0000318"/>
    <property type="project" value="GO_Central"/>
</dbReference>
<dbReference type="CDD" id="cd01926">
    <property type="entry name" value="cyclophilin_ABH_like"/>
    <property type="match status" value="1"/>
</dbReference>
<dbReference type="FunFam" id="2.40.100.10:FF:000075">
    <property type="entry name" value="Peptidyl-prolyl cis-trans isomerase"/>
    <property type="match status" value="1"/>
</dbReference>
<dbReference type="Gene3D" id="2.40.100.10">
    <property type="entry name" value="Cyclophilin-like"/>
    <property type="match status" value="1"/>
</dbReference>
<dbReference type="InterPro" id="IPR029000">
    <property type="entry name" value="Cyclophilin-like_dom_sf"/>
</dbReference>
<dbReference type="InterPro" id="IPR024936">
    <property type="entry name" value="Cyclophilin-type_PPIase"/>
</dbReference>
<dbReference type="InterPro" id="IPR020892">
    <property type="entry name" value="Cyclophilin-type_PPIase_CS"/>
</dbReference>
<dbReference type="InterPro" id="IPR002130">
    <property type="entry name" value="Cyclophilin-type_PPIase_dom"/>
</dbReference>
<dbReference type="PANTHER" id="PTHR11071">
    <property type="entry name" value="PEPTIDYL-PROLYL CIS-TRANS ISOMERASE"/>
    <property type="match status" value="1"/>
</dbReference>
<dbReference type="PANTHER" id="PTHR11071:SF561">
    <property type="entry name" value="PEPTIDYL-PROLYL CIS-TRANS ISOMERASE D-RELATED"/>
    <property type="match status" value="1"/>
</dbReference>
<dbReference type="Pfam" id="PF00160">
    <property type="entry name" value="Pro_isomerase"/>
    <property type="match status" value="1"/>
</dbReference>
<dbReference type="PIRSF" id="PIRSF001467">
    <property type="entry name" value="Peptidylpro_ismrse"/>
    <property type="match status" value="1"/>
</dbReference>
<dbReference type="PRINTS" id="PR00153">
    <property type="entry name" value="CSAPPISMRASE"/>
</dbReference>
<dbReference type="SUPFAM" id="SSF50891">
    <property type="entry name" value="Cyclophilin-like"/>
    <property type="match status" value="1"/>
</dbReference>
<dbReference type="PROSITE" id="PS00170">
    <property type="entry name" value="CSA_PPIASE_1"/>
    <property type="match status" value="1"/>
</dbReference>
<dbReference type="PROSITE" id="PS50072">
    <property type="entry name" value="CSA_PPIASE_2"/>
    <property type="match status" value="1"/>
</dbReference>
<protein>
    <recommendedName>
        <fullName>Peptidyl-prolyl cis-trans isomerase 11</fullName>
        <shortName>PPIase 11</shortName>
        <ecNumber>5.2.1.8</ecNumber>
    </recommendedName>
    <alternativeName>
        <fullName>Cyclophilin-11</fullName>
    </alternativeName>
    <alternativeName>
        <fullName>Rotamase 11</fullName>
    </alternativeName>
</protein>
<gene>
    <name type="primary">cyn-11</name>
    <name type="synonym">cyp-11</name>
    <name type="ORF">T01B7.4</name>
</gene>
<proteinExistence type="evidence at transcript level"/>
<name>CYP11_CAEEL</name>
<reference key="1">
    <citation type="journal article" date="1996" name="Biochem. J.">
        <title>Cloning and biochemical characterization of the cyclophilin homologues from the free-living nematode Caenorhabditis elegans.</title>
        <authorList>
            <person name="Page A.P."/>
            <person name="Macniven K."/>
            <person name="Hengartner M.O."/>
        </authorList>
    </citation>
    <scope>NUCLEOTIDE SEQUENCE [MRNA]</scope>
    <source>
        <strain>Bristol N2</strain>
    </source>
</reference>
<reference key="2">
    <citation type="journal article" date="1998" name="Science">
        <title>Genome sequence of the nematode C. elegans: a platform for investigating biology.</title>
        <authorList>
            <consortium name="The C. elegans sequencing consortium"/>
        </authorList>
    </citation>
    <scope>NUCLEOTIDE SEQUENCE [LARGE SCALE GENOMIC DNA]</scope>
    <source>
        <strain>Bristol N2</strain>
    </source>
</reference>
<feature type="chain" id="PRO_0000064198" description="Peptidyl-prolyl cis-trans isomerase 11">
    <location>
        <begin position="1"/>
        <end position="183"/>
    </location>
</feature>
<feature type="domain" description="PPIase cyclophilin-type" evidence="1">
    <location>
        <begin position="20"/>
        <end position="182"/>
    </location>
</feature>
<sequence>MTEYDKFAEQLRHPDNPIVFLEVTAGGAPIGTIVIELFADVTPRTAENFRQFCTGEYKKDGVPNGYKNCTFHRVIKDFMIQGGDFCNGDGTGLMSIYGSKFRDENFELKHIGPGMLSMANAGSDTNGCQFFITCAKTDFLDNKHVVFGRVLDGMLTVRKIENVPTGANNKPKLPIVVVQCGQL</sequence>
<comment type="function">
    <text>PPIases accelerate the folding of proteins. It catalyzes the cis-trans isomerization of proline imidic peptide bonds in oligopeptides.</text>
</comment>
<comment type="catalytic activity">
    <reaction>
        <text>[protein]-peptidylproline (omega=180) = [protein]-peptidylproline (omega=0)</text>
        <dbReference type="Rhea" id="RHEA:16237"/>
        <dbReference type="Rhea" id="RHEA-COMP:10747"/>
        <dbReference type="Rhea" id="RHEA-COMP:10748"/>
        <dbReference type="ChEBI" id="CHEBI:83833"/>
        <dbReference type="ChEBI" id="CHEBI:83834"/>
        <dbReference type="EC" id="5.2.1.8"/>
    </reaction>
</comment>
<comment type="similarity">
    <text evidence="2">Belongs to the cyclophilin-type PPIase family. PPIase H subfamily.</text>
</comment>